<evidence type="ECO:0000269" key="1">
    <source>
    </source>
</evidence>
<evidence type="ECO:0000303" key="2">
    <source>
    </source>
</evidence>
<evidence type="ECO:0000305" key="3"/>
<evidence type="ECO:0000305" key="4">
    <source>
    </source>
</evidence>
<feature type="chain" id="PRO_0000071728" description="A-type ATP synthase subunit G">
    <location>
        <begin position="1"/>
        <end position="55"/>
    </location>
</feature>
<gene>
    <name type="primary">atpG</name>
    <name evidence="2" type="synonym">ahaG</name>
    <name type="ordered locus">MM_0777.1</name>
</gene>
<reference key="1">
    <citation type="journal article" date="1996" name="J. Biol. Chem.">
        <title>Subunit structure and organization of the genes of the A1A0 ATPase from the Archaeon Methanosarcina mazei Go1.</title>
        <authorList>
            <person name="Wilms R."/>
            <person name="Freiberg C."/>
            <person name="Wegerle E."/>
            <person name="Meier I."/>
            <person name="Mayer F."/>
            <person name="Mueller V."/>
        </authorList>
    </citation>
    <scope>NUCLEOTIDE SEQUENCE [GENOMIC DNA]</scope>
    <scope>FUNCTION</scope>
    <scope>BIOPHYSICOCHEMICAL PROPERTIES</scope>
    <scope>SUBUNIT</scope>
    <scope>SUBCELLULAR LOCATION</scope>
    <source>
        <strain>ATCC BAA-159 / DSM 3647 / Goe1 / Go1 / JCM 11833 / OCM 88</strain>
    </source>
</reference>
<reference key="2">
    <citation type="journal article" date="2002" name="J. Mol. Microbiol. Biotechnol.">
        <title>The genome of Methanosarcina mazei: evidence for lateral gene transfer between Bacteria and Archaea.</title>
        <authorList>
            <person name="Deppenmeier U."/>
            <person name="Johann A."/>
            <person name="Hartsch T."/>
            <person name="Merkl R."/>
            <person name="Schmitz R.A."/>
            <person name="Martinez-Arias R."/>
            <person name="Henne A."/>
            <person name="Wiezer A."/>
            <person name="Baeumer S."/>
            <person name="Jacobi C."/>
            <person name="Brueggemann H."/>
            <person name="Lienard T."/>
            <person name="Christmann A."/>
            <person name="Boemecke M."/>
            <person name="Steckel S."/>
            <person name="Bhattacharyya A."/>
            <person name="Lykidis A."/>
            <person name="Overbeek R."/>
            <person name="Klenk H.-P."/>
            <person name="Gunsalus R.P."/>
            <person name="Fritz H.-J."/>
            <person name="Gottschalk G."/>
        </authorList>
    </citation>
    <scope>NUCLEOTIDE SEQUENCE [LARGE SCALE GENOMIC DNA]</scope>
    <source>
        <strain>ATCC BAA-159 / DSM 3647 / Goe1 / Go1 / JCM 11833 / OCM 88</strain>
    </source>
</reference>
<name>ATPG_METMA</name>
<accession>Q60189</accession>
<sequence>MAECDDRPNLVERAVMKLGEPKNQARLLQVAWRISLLMMVIGFIIIIKTISPNFM</sequence>
<proteinExistence type="evidence at protein level"/>
<comment type="function">
    <text evidence="4">Component of the A-type ATP synthase that produces ATP from ADP in the presence of a proton gradient across the membrane.</text>
</comment>
<comment type="biophysicochemical properties">
    <phDependence>
        <text evidence="1">Optimum pH is 5.2 for ATP hydrolysis.</text>
    </phDependence>
</comment>
<comment type="subunit">
    <text evidence="1">Has multiple subunits, A(3), B(3), C, D, E, F, G, I and K(x); there may be a few other subunits as well.</text>
</comment>
<comment type="subcellular location">
    <subcellularLocation>
        <location evidence="1">Cell membrane</location>
        <topology evidence="4">Peripheral membrane protein</topology>
    </subcellularLocation>
</comment>
<comment type="miscellaneous">
    <text evidence="4">This organism has both a Na(+)-translocating F1F0 ATP synthase and this H(+)-translocating A1A0 ATP synthase.</text>
</comment>
<dbReference type="EMBL" id="U47274">
    <property type="protein sequence ID" value="AAC06378.1"/>
    <property type="molecule type" value="Genomic_DNA"/>
</dbReference>
<dbReference type="EMBL" id="AE008384">
    <property type="status" value="NOT_ANNOTATED_CDS"/>
    <property type="molecule type" value="Genomic_DNA"/>
</dbReference>
<dbReference type="PIR" id="T45110">
    <property type="entry name" value="T45110"/>
</dbReference>
<dbReference type="RefSeq" id="WP_048037701.1">
    <property type="nucleotide sequence ID" value="NC_003901.1"/>
</dbReference>
<dbReference type="TCDB" id="3.A.2.3.1">
    <property type="family name" value="the h+- or na+-translocating f-type, v-type and a-type atpase (f-atpase) superfamily"/>
</dbReference>
<dbReference type="GeneID" id="82159798"/>
<dbReference type="Proteomes" id="UP000000595">
    <property type="component" value="Chromosome"/>
</dbReference>
<dbReference type="GO" id="GO:0005886">
    <property type="term" value="C:plasma membrane"/>
    <property type="evidence" value="ECO:0007669"/>
    <property type="project" value="UniProtKB-SubCell"/>
</dbReference>
<dbReference type="GO" id="GO:1902600">
    <property type="term" value="P:proton transmembrane transport"/>
    <property type="evidence" value="ECO:0007669"/>
    <property type="project" value="UniProtKB-KW"/>
</dbReference>
<protein>
    <recommendedName>
        <fullName evidence="3">A-type ATP synthase subunit G</fullName>
    </recommendedName>
    <alternativeName>
        <fullName evidence="2">A1A0 ATPase subunit G</fullName>
    </alternativeName>
</protein>
<organism>
    <name type="scientific">Methanosarcina mazei (strain ATCC BAA-159 / DSM 3647 / Goe1 / Go1 / JCM 11833 / OCM 88)</name>
    <name type="common">Methanosarcina frisia</name>
    <dbReference type="NCBI Taxonomy" id="192952"/>
    <lineage>
        <taxon>Archaea</taxon>
        <taxon>Methanobacteriati</taxon>
        <taxon>Methanobacteriota</taxon>
        <taxon>Stenosarchaea group</taxon>
        <taxon>Methanomicrobia</taxon>
        <taxon>Methanosarcinales</taxon>
        <taxon>Methanosarcinaceae</taxon>
        <taxon>Methanosarcina</taxon>
    </lineage>
</organism>
<keyword id="KW-1003">Cell membrane</keyword>
<keyword id="KW-0375">Hydrogen ion transport</keyword>
<keyword id="KW-0406">Ion transport</keyword>
<keyword id="KW-0472">Membrane</keyword>
<keyword id="KW-0813">Transport</keyword>